<keyword id="KW-1185">Reference proteome</keyword>
<accession>Q9FYI3</accession>
<gene>
    <name type="ordered locus">At1g30945</name>
    <name type="ORF">F17F8.17</name>
</gene>
<feature type="chain" id="PRO_0000283299" description="Putative F-box protein At1g30945">
    <location>
        <begin position="1"/>
        <end position="168"/>
    </location>
</feature>
<feature type="domain" description="F-box">
    <location>
        <begin position="5"/>
        <end position="52"/>
    </location>
</feature>
<protein>
    <recommendedName>
        <fullName>Putative F-box protein At1g30945</fullName>
    </recommendedName>
</protein>
<sequence length="168" mass="19244">MDSGKTFDSISNDLFLEILLRLSTKSIDRSRCVSKQWASILCSQDFTESEKFNFINASSFLFSSTKLINYKGKLGGIDLAYNHGGVYPVELRMWVLEDVEKHEWSRHVYSLPETIEFQQCNYNICVGGMNAIGFEDYLNRRVYAFVDYVEDLSVNDAMQLKSSSLQNG</sequence>
<name>FB23_ARATH</name>
<organism>
    <name type="scientific">Arabidopsis thaliana</name>
    <name type="common">Mouse-ear cress</name>
    <dbReference type="NCBI Taxonomy" id="3702"/>
    <lineage>
        <taxon>Eukaryota</taxon>
        <taxon>Viridiplantae</taxon>
        <taxon>Streptophyta</taxon>
        <taxon>Embryophyta</taxon>
        <taxon>Tracheophyta</taxon>
        <taxon>Spermatophyta</taxon>
        <taxon>Magnoliopsida</taxon>
        <taxon>eudicotyledons</taxon>
        <taxon>Gunneridae</taxon>
        <taxon>Pentapetalae</taxon>
        <taxon>rosids</taxon>
        <taxon>malvids</taxon>
        <taxon>Brassicales</taxon>
        <taxon>Brassicaceae</taxon>
        <taxon>Camelineae</taxon>
        <taxon>Arabidopsis</taxon>
    </lineage>
</organism>
<proteinExistence type="predicted"/>
<dbReference type="EMBL" id="AC000107">
    <property type="protein sequence ID" value="AAF98188.1"/>
    <property type="molecule type" value="Genomic_DNA"/>
</dbReference>
<dbReference type="EMBL" id="CP002684">
    <property type="status" value="NOT_ANNOTATED_CDS"/>
    <property type="molecule type" value="Genomic_DNA"/>
</dbReference>
<dbReference type="PIR" id="B86435">
    <property type="entry name" value="B86435"/>
</dbReference>
<dbReference type="Araport" id="AT1G30945"/>
<dbReference type="TAIR" id="AT1G30945"/>
<dbReference type="InParanoid" id="Q9FYI3"/>
<dbReference type="PRO" id="PR:Q9FYI3"/>
<dbReference type="Proteomes" id="UP000006548">
    <property type="component" value="Chromosome 1"/>
</dbReference>
<dbReference type="ExpressionAtlas" id="Q9FYI3">
    <property type="expression patterns" value="differential"/>
</dbReference>
<dbReference type="InterPro" id="IPR013187">
    <property type="entry name" value="F-box-assoc_dom_typ3"/>
</dbReference>
<dbReference type="InterPro" id="IPR017451">
    <property type="entry name" value="F-box-assoc_interact_dom"/>
</dbReference>
<dbReference type="InterPro" id="IPR036047">
    <property type="entry name" value="F-box-like_dom_sf"/>
</dbReference>
<dbReference type="InterPro" id="IPR001810">
    <property type="entry name" value="F-box_dom"/>
</dbReference>
<dbReference type="NCBIfam" id="TIGR01640">
    <property type="entry name" value="F_box_assoc_1"/>
    <property type="match status" value="1"/>
</dbReference>
<dbReference type="PANTHER" id="PTHR31111">
    <property type="entry name" value="BNAA05G37150D PROTEIN-RELATED"/>
    <property type="match status" value="1"/>
</dbReference>
<dbReference type="PANTHER" id="PTHR31111:SF130">
    <property type="entry name" value="F-BOX ASSOCIATED UBIQUITINATION EFFECTOR FAMILY PROTEIN"/>
    <property type="match status" value="1"/>
</dbReference>
<dbReference type="Pfam" id="PF00646">
    <property type="entry name" value="F-box"/>
    <property type="match status" value="1"/>
</dbReference>
<dbReference type="Pfam" id="PF08268">
    <property type="entry name" value="FBA_3"/>
    <property type="match status" value="1"/>
</dbReference>
<dbReference type="SMART" id="SM00256">
    <property type="entry name" value="FBOX"/>
    <property type="match status" value="1"/>
</dbReference>
<dbReference type="SUPFAM" id="SSF81383">
    <property type="entry name" value="F-box domain"/>
    <property type="match status" value="1"/>
</dbReference>
<reference key="1">
    <citation type="journal article" date="2000" name="Nature">
        <title>Sequence and analysis of chromosome 1 of the plant Arabidopsis thaliana.</title>
        <authorList>
            <person name="Theologis A."/>
            <person name="Ecker J.R."/>
            <person name="Palm C.J."/>
            <person name="Federspiel N.A."/>
            <person name="Kaul S."/>
            <person name="White O."/>
            <person name="Alonso J."/>
            <person name="Altafi H."/>
            <person name="Araujo R."/>
            <person name="Bowman C.L."/>
            <person name="Brooks S.Y."/>
            <person name="Buehler E."/>
            <person name="Chan A."/>
            <person name="Chao Q."/>
            <person name="Chen H."/>
            <person name="Cheuk R.F."/>
            <person name="Chin C.W."/>
            <person name="Chung M.K."/>
            <person name="Conn L."/>
            <person name="Conway A.B."/>
            <person name="Conway A.R."/>
            <person name="Creasy T.H."/>
            <person name="Dewar K."/>
            <person name="Dunn P."/>
            <person name="Etgu P."/>
            <person name="Feldblyum T.V."/>
            <person name="Feng J.-D."/>
            <person name="Fong B."/>
            <person name="Fujii C.Y."/>
            <person name="Gill J.E."/>
            <person name="Goldsmith A.D."/>
            <person name="Haas B."/>
            <person name="Hansen N.F."/>
            <person name="Hughes B."/>
            <person name="Huizar L."/>
            <person name="Hunter J.L."/>
            <person name="Jenkins J."/>
            <person name="Johnson-Hopson C."/>
            <person name="Khan S."/>
            <person name="Khaykin E."/>
            <person name="Kim C.J."/>
            <person name="Koo H.L."/>
            <person name="Kremenetskaia I."/>
            <person name="Kurtz D.B."/>
            <person name="Kwan A."/>
            <person name="Lam B."/>
            <person name="Langin-Hooper S."/>
            <person name="Lee A."/>
            <person name="Lee J.M."/>
            <person name="Lenz C.A."/>
            <person name="Li J.H."/>
            <person name="Li Y.-P."/>
            <person name="Lin X."/>
            <person name="Liu S.X."/>
            <person name="Liu Z.A."/>
            <person name="Luros J.S."/>
            <person name="Maiti R."/>
            <person name="Marziali A."/>
            <person name="Militscher J."/>
            <person name="Miranda M."/>
            <person name="Nguyen M."/>
            <person name="Nierman W.C."/>
            <person name="Osborne B.I."/>
            <person name="Pai G."/>
            <person name="Peterson J."/>
            <person name="Pham P.K."/>
            <person name="Rizzo M."/>
            <person name="Rooney T."/>
            <person name="Rowley D."/>
            <person name="Sakano H."/>
            <person name="Salzberg S.L."/>
            <person name="Schwartz J.R."/>
            <person name="Shinn P."/>
            <person name="Southwick A.M."/>
            <person name="Sun H."/>
            <person name="Tallon L.J."/>
            <person name="Tambunga G."/>
            <person name="Toriumi M.J."/>
            <person name="Town C.D."/>
            <person name="Utterback T."/>
            <person name="Van Aken S."/>
            <person name="Vaysberg M."/>
            <person name="Vysotskaia V.S."/>
            <person name="Walker M."/>
            <person name="Wu D."/>
            <person name="Yu G."/>
            <person name="Fraser C.M."/>
            <person name="Venter J.C."/>
            <person name="Davis R.W."/>
        </authorList>
    </citation>
    <scope>NUCLEOTIDE SEQUENCE [LARGE SCALE GENOMIC DNA]</scope>
    <source>
        <strain>cv. Columbia</strain>
    </source>
</reference>
<reference key="2">
    <citation type="journal article" date="2017" name="Plant J.">
        <title>Araport11: a complete reannotation of the Arabidopsis thaliana reference genome.</title>
        <authorList>
            <person name="Cheng C.Y."/>
            <person name="Krishnakumar V."/>
            <person name="Chan A.P."/>
            <person name="Thibaud-Nissen F."/>
            <person name="Schobel S."/>
            <person name="Town C.D."/>
        </authorList>
    </citation>
    <scope>GENOME REANNOTATION</scope>
    <source>
        <strain>cv. Columbia</strain>
    </source>
</reference>